<dbReference type="EC" id="1.6.2.2"/>
<dbReference type="EMBL" id="Z49218">
    <property type="protein sequence ID" value="CAA89155.1"/>
    <property type="molecule type" value="Genomic_DNA"/>
</dbReference>
<dbReference type="EMBL" id="Z50178">
    <property type="protein sequence ID" value="CAA90558.1"/>
    <property type="molecule type" value="Genomic_DNA"/>
</dbReference>
<dbReference type="EMBL" id="BK006946">
    <property type="protein sequence ID" value="DAA09774.1"/>
    <property type="molecule type" value="Genomic_DNA"/>
</dbReference>
<dbReference type="PIR" id="S54059">
    <property type="entry name" value="S54059"/>
</dbReference>
<dbReference type="RefSeq" id="NP_013581.1">
    <property type="nucleotide sequence ID" value="NM_001182488.1"/>
</dbReference>
<dbReference type="SMR" id="Q12746"/>
<dbReference type="BioGRID" id="35080">
    <property type="interactions" value="332"/>
</dbReference>
<dbReference type="DIP" id="DIP-4519N"/>
<dbReference type="FunCoup" id="Q12746">
    <property type="interactions" value="142"/>
</dbReference>
<dbReference type="IntAct" id="Q12746">
    <property type="interactions" value="19"/>
</dbReference>
<dbReference type="STRING" id="4932.YML125C"/>
<dbReference type="iPTMnet" id="Q12746"/>
<dbReference type="PaxDb" id="4932-YML125C"/>
<dbReference type="PeptideAtlas" id="Q12746"/>
<dbReference type="EnsemblFungi" id="YML125C_mRNA">
    <property type="protein sequence ID" value="YML125C"/>
    <property type="gene ID" value="YML125C"/>
</dbReference>
<dbReference type="GeneID" id="854914"/>
<dbReference type="KEGG" id="sce:YML125C"/>
<dbReference type="AGR" id="SGD:S000004594"/>
<dbReference type="SGD" id="S000004594">
    <property type="gene designation" value="PGA3"/>
</dbReference>
<dbReference type="VEuPathDB" id="FungiDB:YML125C"/>
<dbReference type="eggNOG" id="KOG0534">
    <property type="taxonomic scope" value="Eukaryota"/>
</dbReference>
<dbReference type="GeneTree" id="ENSGT00940000176475"/>
<dbReference type="HOGENOM" id="CLU_003827_9_0_1"/>
<dbReference type="InParanoid" id="Q12746"/>
<dbReference type="OMA" id="CLDPENW"/>
<dbReference type="OrthoDB" id="432685at2759"/>
<dbReference type="BioCyc" id="YEAST:G3O-32704-MONOMER"/>
<dbReference type="Reactome" id="R-SCE-114608">
    <property type="pathway name" value="Platelet degranulation"/>
</dbReference>
<dbReference type="BioGRID-ORCS" id="854914">
    <property type="hits" value="2 hits in 10 CRISPR screens"/>
</dbReference>
<dbReference type="PRO" id="PR:Q12746"/>
<dbReference type="Proteomes" id="UP000002311">
    <property type="component" value="Chromosome XIII"/>
</dbReference>
<dbReference type="RNAct" id="Q12746">
    <property type="molecule type" value="protein"/>
</dbReference>
<dbReference type="GO" id="GO:0005783">
    <property type="term" value="C:endoplasmic reticulum"/>
    <property type="evidence" value="ECO:0007005"/>
    <property type="project" value="SGD"/>
</dbReference>
<dbReference type="GO" id="GO:0005789">
    <property type="term" value="C:endoplasmic reticulum membrane"/>
    <property type="evidence" value="ECO:0007669"/>
    <property type="project" value="UniProtKB-SubCell"/>
</dbReference>
<dbReference type="GO" id="GO:0005886">
    <property type="term" value="C:plasma membrane"/>
    <property type="evidence" value="ECO:0000314"/>
    <property type="project" value="SGD"/>
</dbReference>
<dbReference type="GO" id="GO:0004128">
    <property type="term" value="F:cytochrome-b5 reductase activity, acting on NAD(P)H"/>
    <property type="evidence" value="ECO:0000315"/>
    <property type="project" value="SGD"/>
</dbReference>
<dbReference type="GO" id="GO:0006696">
    <property type="term" value="P:ergosterol biosynthetic process"/>
    <property type="evidence" value="ECO:0000318"/>
    <property type="project" value="GO_Central"/>
</dbReference>
<dbReference type="GO" id="GO:0015031">
    <property type="term" value="P:protein transport"/>
    <property type="evidence" value="ECO:0000315"/>
    <property type="project" value="SGD"/>
</dbReference>
<dbReference type="CDD" id="cd06183">
    <property type="entry name" value="cyt_b5_reduct_like"/>
    <property type="match status" value="1"/>
</dbReference>
<dbReference type="FunFam" id="2.40.30.10:FF:000069">
    <property type="entry name" value="NADH-cytochrome b5 reductase"/>
    <property type="match status" value="1"/>
</dbReference>
<dbReference type="FunFam" id="3.40.50.80:FF:000009">
    <property type="entry name" value="NADH-cytochrome b5 reductase"/>
    <property type="match status" value="1"/>
</dbReference>
<dbReference type="Gene3D" id="3.40.50.80">
    <property type="entry name" value="Nucleotide-binding domain of ferredoxin-NADP reductase (FNR) module"/>
    <property type="match status" value="1"/>
</dbReference>
<dbReference type="Gene3D" id="2.40.30.10">
    <property type="entry name" value="Translation factors"/>
    <property type="match status" value="1"/>
</dbReference>
<dbReference type="InterPro" id="IPR001834">
    <property type="entry name" value="CBR-like"/>
</dbReference>
<dbReference type="InterPro" id="IPR008333">
    <property type="entry name" value="Cbr1-like_FAD-bd_dom"/>
</dbReference>
<dbReference type="InterPro" id="IPR017927">
    <property type="entry name" value="FAD-bd_FR_type"/>
</dbReference>
<dbReference type="InterPro" id="IPR001709">
    <property type="entry name" value="Flavoprot_Pyr_Nucl_cyt_Rdtase"/>
</dbReference>
<dbReference type="InterPro" id="IPR039261">
    <property type="entry name" value="FNR_nucleotide-bd"/>
</dbReference>
<dbReference type="InterPro" id="IPR001433">
    <property type="entry name" value="OxRdtase_FAD/NAD-bd"/>
</dbReference>
<dbReference type="InterPro" id="IPR017938">
    <property type="entry name" value="Riboflavin_synthase-like_b-brl"/>
</dbReference>
<dbReference type="PANTHER" id="PTHR19370">
    <property type="entry name" value="NADH-CYTOCHROME B5 REDUCTASE"/>
    <property type="match status" value="1"/>
</dbReference>
<dbReference type="PANTHER" id="PTHR19370:SF143">
    <property type="entry name" value="PLASMA MEMBRANE-ASSOCIATED COENZYME Q6 REDUCTASE PGA3"/>
    <property type="match status" value="1"/>
</dbReference>
<dbReference type="Pfam" id="PF00970">
    <property type="entry name" value="FAD_binding_6"/>
    <property type="match status" value="1"/>
</dbReference>
<dbReference type="Pfam" id="PF00175">
    <property type="entry name" value="NAD_binding_1"/>
    <property type="match status" value="1"/>
</dbReference>
<dbReference type="PRINTS" id="PR00406">
    <property type="entry name" value="CYTB5RDTASE"/>
</dbReference>
<dbReference type="PRINTS" id="PR00371">
    <property type="entry name" value="FPNCR"/>
</dbReference>
<dbReference type="SUPFAM" id="SSF52343">
    <property type="entry name" value="Ferredoxin reductase-like, C-terminal NADP-linked domain"/>
    <property type="match status" value="1"/>
</dbReference>
<dbReference type="SUPFAM" id="SSF63380">
    <property type="entry name" value="Riboflavin synthase domain-like"/>
    <property type="match status" value="1"/>
</dbReference>
<dbReference type="PROSITE" id="PS51384">
    <property type="entry name" value="FAD_FR"/>
    <property type="match status" value="1"/>
</dbReference>
<gene>
    <name type="primary">PGA3</name>
    <name type="synonym">NQR1</name>
    <name type="ordered locus">YML125C</name>
    <name type="ORF">YM4987.10C</name>
    <name type="ORF">YM7056.01C</name>
</gene>
<name>PGA3_YEAST</name>
<accession>Q12746</accession>
<accession>D6W0G0</accession>
<proteinExistence type="evidence at protein level"/>
<keyword id="KW-1003">Cell membrane</keyword>
<keyword id="KW-0256">Endoplasmic reticulum</keyword>
<keyword id="KW-0274">FAD</keyword>
<keyword id="KW-0285">Flavoprotein</keyword>
<keyword id="KW-0472">Membrane</keyword>
<keyword id="KW-0520">NAD</keyword>
<keyword id="KW-0560">Oxidoreductase</keyword>
<keyword id="KW-1185">Reference proteome</keyword>
<keyword id="KW-0812">Transmembrane</keyword>
<keyword id="KW-1133">Transmembrane helix</keyword>
<sequence length="312" mass="35287">MSKEDIEGTNILDEPVHGIYIPAALFVVGVAITTYMSGELKILWSLPILFMIIFVRAYSAYKRRRSLYPDRWTSLELEDQTIISKNTALYRFKLKTRLESLDIPAGHHVAVRVPIDGKQEVRYYNPISSKLESGYLDLVVKAYVDGKVSKYFAGLNSGDTVDFKGPIGTLNYEPNSSKHLGIVAGGSGITPVLQILNEIITVPEDLTKVSLLYANETENDILLKDELDEMAEKYPHFQVHYVVHYPSDRWTGDVGYITKDQMNRYLPEYSEDNRLLICGPDGMNNLALQYAKELGWKVNSTRSSGDDQVFVF</sequence>
<reference key="1">
    <citation type="journal article" date="1997" name="Nature">
        <title>The nucleotide sequence of Saccharomyces cerevisiae chromosome XIII.</title>
        <authorList>
            <person name="Bowman S."/>
            <person name="Churcher C.M."/>
            <person name="Badcock K."/>
            <person name="Brown D."/>
            <person name="Chillingworth T."/>
            <person name="Connor R."/>
            <person name="Dedman K."/>
            <person name="Devlin K."/>
            <person name="Gentles S."/>
            <person name="Hamlin N."/>
            <person name="Hunt S."/>
            <person name="Jagels K."/>
            <person name="Lye G."/>
            <person name="Moule S."/>
            <person name="Odell C."/>
            <person name="Pearson D."/>
            <person name="Rajandream M.A."/>
            <person name="Rice P."/>
            <person name="Skelton J."/>
            <person name="Walsh S.V."/>
            <person name="Whitehead S."/>
            <person name="Barrell B.G."/>
        </authorList>
    </citation>
    <scope>NUCLEOTIDE SEQUENCE [LARGE SCALE GENOMIC DNA]</scope>
    <source>
        <strain>ATCC 204508 / S288c</strain>
    </source>
</reference>
<reference key="2">
    <citation type="journal article" date="2014" name="G3 (Bethesda)">
        <title>The reference genome sequence of Saccharomyces cerevisiae: Then and now.</title>
        <authorList>
            <person name="Engel S.R."/>
            <person name="Dietrich F.S."/>
            <person name="Fisk D.G."/>
            <person name="Binkley G."/>
            <person name="Balakrishnan R."/>
            <person name="Costanzo M.C."/>
            <person name="Dwight S.S."/>
            <person name="Hitz B.C."/>
            <person name="Karra K."/>
            <person name="Nash R.S."/>
            <person name="Weng S."/>
            <person name="Wong E.D."/>
            <person name="Lloyd P."/>
            <person name="Skrzypek M.S."/>
            <person name="Miyasato S.R."/>
            <person name="Simison M."/>
            <person name="Cherry J.M."/>
        </authorList>
    </citation>
    <scope>GENOME REANNOTATION</scope>
    <source>
        <strain>ATCC 204508 / S288c</strain>
    </source>
</reference>
<reference key="3">
    <citation type="journal article" date="2003" name="Nature">
        <title>Global analysis of protein localization in budding yeast.</title>
        <authorList>
            <person name="Huh W.-K."/>
            <person name="Falvo J.V."/>
            <person name="Gerke L.C."/>
            <person name="Carroll A.S."/>
            <person name="Howson R.W."/>
            <person name="Weissman J.S."/>
            <person name="O'Shea E.K."/>
        </authorList>
    </citation>
    <scope>SUBCELLULAR LOCATION [LARGE SCALE ANALYSIS]</scope>
</reference>
<reference key="4">
    <citation type="journal article" date="2003" name="Nature">
        <title>Global analysis of protein expression in yeast.</title>
        <authorList>
            <person name="Ghaemmaghami S."/>
            <person name="Huh W.-K."/>
            <person name="Bower K."/>
            <person name="Howson R.W."/>
            <person name="Belle A."/>
            <person name="Dephoure N."/>
            <person name="O'Shea E.K."/>
            <person name="Weissman J.S."/>
        </authorList>
    </citation>
    <scope>LEVEL OF PROTEIN EXPRESSION [LARGE SCALE ANALYSIS]</scope>
</reference>
<reference key="5">
    <citation type="journal article" date="2006" name="Mol. Biol. Cell">
        <title>A survey of essential gene function in the yeast cell division cycle.</title>
        <authorList>
            <person name="Yu L."/>
            <person name="Pena Castillo L."/>
            <person name="Mnaimneh S."/>
            <person name="Hughes T.R."/>
            <person name="Brown G.W."/>
        </authorList>
    </citation>
    <scope>FUNCTION</scope>
</reference>
<reference key="6">
    <citation type="journal article" date="2006" name="Proc. Natl. Acad. Sci. U.S.A.">
        <title>A global topology map of the Saccharomyces cerevisiae membrane proteome.</title>
        <authorList>
            <person name="Kim H."/>
            <person name="Melen K."/>
            <person name="Oesterberg M."/>
            <person name="von Heijne G."/>
        </authorList>
    </citation>
    <scope>TOPOLOGY [LARGE SCALE ANALYSIS]</scope>
    <source>
        <strain>ATCC 208353 / W303-1A</strain>
    </source>
</reference>
<reference key="7">
    <citation type="journal article" date="2009" name="Aging Cell">
        <title>NQR1 controls lifespan by regulating the promotion of respiratory metabolism in yeast.</title>
        <authorList>
            <person name="Jimenez-Hidalgo M."/>
            <person name="Santos-Ocana C."/>
            <person name="Padilla S."/>
            <person name="Villalba J.M."/>
            <person name="Lopez-Lluch G."/>
            <person name="Martin-Montalvo A."/>
            <person name="Minor R.K."/>
            <person name="Sinclair D.A."/>
            <person name="de Cabo R."/>
            <person name="Navas P."/>
        </authorList>
    </citation>
    <scope>INDUCTION</scope>
    <scope>SUBCELLULAR LOCATION</scope>
    <scope>FUNCTION</scope>
    <scope>CATALYTIC ACTIVITY</scope>
    <scope>ACTIVITY REGULATION</scope>
</reference>
<protein>
    <recommendedName>
        <fullName>Plasma membrane-associated coenzyme Q6 reductase PGA3</fullName>
        <ecNumber>1.6.2.2</ecNumber>
    </recommendedName>
    <alternativeName>
        <fullName>Processing of GAS1 and ALP protein 3</fullName>
    </alternativeName>
</protein>
<comment type="function">
    <text evidence="5 6">NADH-dependent cytochrome b5 reductase that reduces coenzyme Q6 at the plasma membrane and mediates lifespan extension by calorie restriction by shifting fermentative to respiratory metabolism, probably through modulating the NAD(+)/NADH ratio.</text>
</comment>
<comment type="catalytic activity">
    <reaction evidence="6">
        <text>2 Fe(III)-[cytochrome b5] + NADH = 2 Fe(II)-[cytochrome b5] + NAD(+) + H(+)</text>
        <dbReference type="Rhea" id="RHEA:46680"/>
        <dbReference type="Rhea" id="RHEA-COMP:10438"/>
        <dbReference type="Rhea" id="RHEA-COMP:10439"/>
        <dbReference type="ChEBI" id="CHEBI:15378"/>
        <dbReference type="ChEBI" id="CHEBI:29033"/>
        <dbReference type="ChEBI" id="CHEBI:29034"/>
        <dbReference type="ChEBI" id="CHEBI:57540"/>
        <dbReference type="ChEBI" id="CHEBI:57945"/>
        <dbReference type="EC" id="1.6.2.2"/>
    </reaction>
</comment>
<comment type="cofactor">
    <cofactor evidence="1">
        <name>FAD</name>
        <dbReference type="ChEBI" id="CHEBI:57692"/>
    </cofactor>
</comment>
<comment type="activity regulation">
    <text evidence="6">Inhibited by diphenylene iodonium (DPI).</text>
</comment>
<comment type="subcellular location">
    <subcellularLocation>
        <location>Cell membrane</location>
        <topology>Multi-pass membrane protein</topology>
    </subcellularLocation>
    <subcellularLocation>
        <location>Endoplasmic reticulum membrane</location>
        <topology>Multi-pass membrane protein</topology>
    </subcellularLocation>
</comment>
<comment type="induction">
    <text evidence="6">By calorie restriction.</text>
</comment>
<comment type="miscellaneous">
    <text evidence="4">Present with 29000 molecules/cell in log phase SD medium.</text>
</comment>
<comment type="similarity">
    <text evidence="7">Belongs to the flavoprotein pyridine nucleotide cytochrome reductase family.</text>
</comment>
<evidence type="ECO:0000250" key="1"/>
<evidence type="ECO:0000255" key="2"/>
<evidence type="ECO:0000255" key="3">
    <source>
        <dbReference type="PROSITE-ProRule" id="PRU00716"/>
    </source>
</evidence>
<evidence type="ECO:0000269" key="4">
    <source>
    </source>
</evidence>
<evidence type="ECO:0000269" key="5">
    <source>
    </source>
</evidence>
<evidence type="ECO:0000269" key="6">
    <source>
    </source>
</evidence>
<evidence type="ECO:0000305" key="7"/>
<feature type="chain" id="PRO_0000167628" description="Plasma membrane-associated coenzyme Q6 reductase PGA3">
    <location>
        <begin position="1"/>
        <end position="312"/>
    </location>
</feature>
<feature type="topological domain" description="Extracellular" evidence="2">
    <location>
        <begin position="1"/>
        <end position="15"/>
    </location>
</feature>
<feature type="transmembrane region" description="Helical" evidence="2">
    <location>
        <begin position="16"/>
        <end position="36"/>
    </location>
</feature>
<feature type="topological domain" description="Cytoplasmic" evidence="2">
    <location>
        <begin position="37"/>
        <end position="39"/>
    </location>
</feature>
<feature type="transmembrane region" description="Helical" evidence="2">
    <location>
        <begin position="40"/>
        <end position="60"/>
    </location>
</feature>
<feature type="topological domain" description="Extracellular" evidence="2">
    <location>
        <begin position="61"/>
        <end position="179"/>
    </location>
</feature>
<feature type="transmembrane region" description="Helical" evidence="2">
    <location>
        <begin position="180"/>
        <end position="200"/>
    </location>
</feature>
<feature type="topological domain" description="Cytoplasmic" evidence="2">
    <location>
        <begin position="201"/>
        <end position="312"/>
    </location>
</feature>
<feature type="domain" description="FAD-binding FR-type" evidence="3">
    <location>
        <begin position="70"/>
        <end position="173"/>
    </location>
</feature>
<feature type="binding site" evidence="1">
    <location>
        <begin position="153"/>
        <end position="168"/>
    </location>
    <ligand>
        <name>FAD</name>
        <dbReference type="ChEBI" id="CHEBI:57692"/>
    </ligand>
</feature>
<feature type="binding site" evidence="1">
    <location>
        <begin position="179"/>
        <end position="211"/>
    </location>
    <ligand>
        <name>FAD</name>
        <dbReference type="ChEBI" id="CHEBI:57692"/>
    </ligand>
</feature>
<organism>
    <name type="scientific">Saccharomyces cerevisiae (strain ATCC 204508 / S288c)</name>
    <name type="common">Baker's yeast</name>
    <dbReference type="NCBI Taxonomy" id="559292"/>
    <lineage>
        <taxon>Eukaryota</taxon>
        <taxon>Fungi</taxon>
        <taxon>Dikarya</taxon>
        <taxon>Ascomycota</taxon>
        <taxon>Saccharomycotina</taxon>
        <taxon>Saccharomycetes</taxon>
        <taxon>Saccharomycetales</taxon>
        <taxon>Saccharomycetaceae</taxon>
        <taxon>Saccharomyces</taxon>
    </lineage>
</organism>